<reference key="1">
    <citation type="journal article" date="2002" name="J. Bacteriol.">
        <title>Whole-genome comparison of Mycobacterium tuberculosis clinical and laboratory strains.</title>
        <authorList>
            <person name="Fleischmann R.D."/>
            <person name="Alland D."/>
            <person name="Eisen J.A."/>
            <person name="Carpenter L."/>
            <person name="White O."/>
            <person name="Peterson J.D."/>
            <person name="DeBoy R.T."/>
            <person name="Dodson R.J."/>
            <person name="Gwinn M.L."/>
            <person name="Haft D.H."/>
            <person name="Hickey E.K."/>
            <person name="Kolonay J.F."/>
            <person name="Nelson W.C."/>
            <person name="Umayam L.A."/>
            <person name="Ermolaeva M.D."/>
            <person name="Salzberg S.L."/>
            <person name="Delcher A."/>
            <person name="Utterback T.R."/>
            <person name="Weidman J.F."/>
            <person name="Khouri H.M."/>
            <person name="Gill J."/>
            <person name="Mikula A."/>
            <person name="Bishai W."/>
            <person name="Jacobs W.R. Jr."/>
            <person name="Venter J.C."/>
            <person name="Fraser C.M."/>
        </authorList>
    </citation>
    <scope>NUCLEOTIDE SEQUENCE [LARGE SCALE GENOMIC DNA]</scope>
    <source>
        <strain>CDC 1551 / Oshkosh</strain>
    </source>
</reference>
<dbReference type="EC" id="6.3.2.9"/>
<dbReference type="EMBL" id="AE000516">
    <property type="protein sequence ID" value="AAK46498.1"/>
    <property type="molecule type" value="Genomic_DNA"/>
</dbReference>
<dbReference type="PIR" id="G70579">
    <property type="entry name" value="G70579"/>
</dbReference>
<dbReference type="SMR" id="P9WJL4"/>
<dbReference type="KEGG" id="mtc:MT2214"/>
<dbReference type="HOGENOM" id="CLU_032540_0_0_11"/>
<dbReference type="UniPathway" id="UPA00219"/>
<dbReference type="Proteomes" id="UP000001020">
    <property type="component" value="Chromosome"/>
</dbReference>
<dbReference type="GO" id="GO:0005737">
    <property type="term" value="C:cytoplasm"/>
    <property type="evidence" value="ECO:0007669"/>
    <property type="project" value="UniProtKB-SubCell"/>
</dbReference>
<dbReference type="GO" id="GO:0005524">
    <property type="term" value="F:ATP binding"/>
    <property type="evidence" value="ECO:0007669"/>
    <property type="project" value="UniProtKB-UniRule"/>
</dbReference>
<dbReference type="GO" id="GO:0008764">
    <property type="term" value="F:UDP-N-acetylmuramoylalanine-D-glutamate ligase activity"/>
    <property type="evidence" value="ECO:0007669"/>
    <property type="project" value="UniProtKB-UniRule"/>
</dbReference>
<dbReference type="GO" id="GO:0051301">
    <property type="term" value="P:cell division"/>
    <property type="evidence" value="ECO:0007669"/>
    <property type="project" value="UniProtKB-KW"/>
</dbReference>
<dbReference type="GO" id="GO:0071555">
    <property type="term" value="P:cell wall organization"/>
    <property type="evidence" value="ECO:0007669"/>
    <property type="project" value="UniProtKB-KW"/>
</dbReference>
<dbReference type="GO" id="GO:0009252">
    <property type="term" value="P:peptidoglycan biosynthetic process"/>
    <property type="evidence" value="ECO:0007669"/>
    <property type="project" value="UniProtKB-UniRule"/>
</dbReference>
<dbReference type="GO" id="GO:0008360">
    <property type="term" value="P:regulation of cell shape"/>
    <property type="evidence" value="ECO:0007669"/>
    <property type="project" value="UniProtKB-KW"/>
</dbReference>
<dbReference type="Gene3D" id="3.90.190.20">
    <property type="entry name" value="Mur ligase, C-terminal domain"/>
    <property type="match status" value="1"/>
</dbReference>
<dbReference type="Gene3D" id="3.40.1190.10">
    <property type="entry name" value="Mur-like, catalytic domain"/>
    <property type="match status" value="1"/>
</dbReference>
<dbReference type="Gene3D" id="3.40.50.720">
    <property type="entry name" value="NAD(P)-binding Rossmann-like Domain"/>
    <property type="match status" value="1"/>
</dbReference>
<dbReference type="HAMAP" id="MF_00639">
    <property type="entry name" value="MurD"/>
    <property type="match status" value="1"/>
</dbReference>
<dbReference type="InterPro" id="IPR036565">
    <property type="entry name" value="Mur-like_cat_sf"/>
</dbReference>
<dbReference type="InterPro" id="IPR004101">
    <property type="entry name" value="Mur_ligase_C"/>
</dbReference>
<dbReference type="InterPro" id="IPR036615">
    <property type="entry name" value="Mur_ligase_C_dom_sf"/>
</dbReference>
<dbReference type="InterPro" id="IPR013221">
    <property type="entry name" value="Mur_ligase_cen"/>
</dbReference>
<dbReference type="InterPro" id="IPR005762">
    <property type="entry name" value="MurD"/>
</dbReference>
<dbReference type="NCBIfam" id="TIGR01087">
    <property type="entry name" value="murD"/>
    <property type="match status" value="1"/>
</dbReference>
<dbReference type="PANTHER" id="PTHR43692">
    <property type="entry name" value="UDP-N-ACETYLMURAMOYLALANINE--D-GLUTAMATE LIGASE"/>
    <property type="match status" value="1"/>
</dbReference>
<dbReference type="PANTHER" id="PTHR43692:SF1">
    <property type="entry name" value="UDP-N-ACETYLMURAMOYLALANINE--D-GLUTAMATE LIGASE"/>
    <property type="match status" value="1"/>
</dbReference>
<dbReference type="Pfam" id="PF02875">
    <property type="entry name" value="Mur_ligase_C"/>
    <property type="match status" value="1"/>
</dbReference>
<dbReference type="Pfam" id="PF08245">
    <property type="entry name" value="Mur_ligase_M"/>
    <property type="match status" value="1"/>
</dbReference>
<dbReference type="SUPFAM" id="SSF51984">
    <property type="entry name" value="MurCD N-terminal domain"/>
    <property type="match status" value="1"/>
</dbReference>
<dbReference type="SUPFAM" id="SSF53623">
    <property type="entry name" value="MurD-like peptide ligases, catalytic domain"/>
    <property type="match status" value="1"/>
</dbReference>
<dbReference type="SUPFAM" id="SSF53244">
    <property type="entry name" value="MurD-like peptide ligases, peptide-binding domain"/>
    <property type="match status" value="1"/>
</dbReference>
<gene>
    <name type="primary">murD</name>
    <name type="ordered locus">MT2214</name>
</gene>
<feature type="chain" id="PRO_0000427809" description="UDP-N-acetylmuramoylalanine--D-glutamate ligase">
    <location>
        <begin position="1"/>
        <end position="496"/>
    </location>
</feature>
<feature type="binding site" evidence="2">
    <location>
        <begin position="130"/>
        <end position="136"/>
    </location>
    <ligand>
        <name>ATP</name>
        <dbReference type="ChEBI" id="CHEBI:30616"/>
    </ligand>
</feature>
<comment type="function">
    <text evidence="1">Cell wall formation. Catalyzes the addition of glutamate to the nucleotide precursor UDP-N-acetylmuramoyl-L-alanine (UMA).</text>
</comment>
<comment type="catalytic activity">
    <reaction>
        <text>UDP-N-acetyl-alpha-D-muramoyl-L-alanine + D-glutamate + ATP = UDP-N-acetyl-alpha-D-muramoyl-L-alanyl-D-glutamate + ADP + phosphate + H(+)</text>
        <dbReference type="Rhea" id="RHEA:16429"/>
        <dbReference type="ChEBI" id="CHEBI:15378"/>
        <dbReference type="ChEBI" id="CHEBI:29986"/>
        <dbReference type="ChEBI" id="CHEBI:30616"/>
        <dbReference type="ChEBI" id="CHEBI:43474"/>
        <dbReference type="ChEBI" id="CHEBI:83898"/>
        <dbReference type="ChEBI" id="CHEBI:83900"/>
        <dbReference type="ChEBI" id="CHEBI:456216"/>
        <dbReference type="EC" id="6.3.2.9"/>
    </reaction>
</comment>
<comment type="pathway">
    <text>Cell wall biogenesis; peptidoglycan biosynthesis.</text>
</comment>
<comment type="subcellular location">
    <subcellularLocation>
        <location evidence="1">Cytoplasm</location>
    </subcellularLocation>
</comment>
<comment type="similarity">
    <text evidence="3">Belongs to the MurCDEF family.</text>
</comment>
<proteinExistence type="inferred from homology"/>
<sequence length="496" mass="50267">MSGLPRSVPDVLDPLGPGAPVLVAGGRVTGQAVAAVLTRFGATPTVCDDDPVMLRPHAERGLPTVSSSDAVQQITGYALVVASPGFSPAIPLLAAAAAAGVPIWGDVELAWRLDAAGCYGPPRSWLVVTGTNGKTTTTSMLHAMLIAGGRRAVLCGNIGSAVLDVLDEPAELLAVELSSFQLHWAPSLRPEAGAVLNIAEDHLDWHATMAEYTAAKARVLTGGVAVAGLDDSRAAALLDGSPAQVRVGFRLGEPAAGELGVRDAHLVDRAFSDDLTLLPVASIPVPGPVGVLDALAAAALARSVGVPAGAIADAVTSFRVGRHRAEVVAVADGITYVDDSKATNPHAARASVLAYPRVVWIAGGLLKGASLHAEVAAMASRLVGAVLIGRDRAAVAEALSRHAPDVPVVQVVAGEDTGMPATVEVPVACVLDVAKDDKAGETVGAAVMTAAVAAARRMAQPGDTVLLAPAGASFDQFTGYADRGEAFATAVRAVIR</sequence>
<accession>P9WJL4</accession>
<accession>L0TBN7</accession>
<accession>O06222</accession>
<organism>
    <name type="scientific">Mycobacterium tuberculosis (strain CDC 1551 / Oshkosh)</name>
    <dbReference type="NCBI Taxonomy" id="83331"/>
    <lineage>
        <taxon>Bacteria</taxon>
        <taxon>Bacillati</taxon>
        <taxon>Actinomycetota</taxon>
        <taxon>Actinomycetes</taxon>
        <taxon>Mycobacteriales</taxon>
        <taxon>Mycobacteriaceae</taxon>
        <taxon>Mycobacterium</taxon>
        <taxon>Mycobacterium tuberculosis complex</taxon>
    </lineage>
</organism>
<keyword id="KW-0067">ATP-binding</keyword>
<keyword id="KW-0131">Cell cycle</keyword>
<keyword id="KW-0132">Cell division</keyword>
<keyword id="KW-0133">Cell shape</keyword>
<keyword id="KW-0961">Cell wall biogenesis/degradation</keyword>
<keyword id="KW-0963">Cytoplasm</keyword>
<keyword id="KW-0436">Ligase</keyword>
<keyword id="KW-0547">Nucleotide-binding</keyword>
<keyword id="KW-0573">Peptidoglycan synthesis</keyword>
<keyword id="KW-1185">Reference proteome</keyword>
<evidence type="ECO:0000250" key="1"/>
<evidence type="ECO:0000255" key="2"/>
<evidence type="ECO:0000305" key="3"/>
<protein>
    <recommendedName>
        <fullName>UDP-N-acetylmuramoylalanine--D-glutamate ligase</fullName>
        <ecNumber>6.3.2.9</ecNumber>
    </recommendedName>
    <alternativeName>
        <fullName>D-glutamic acid-adding enzyme</fullName>
    </alternativeName>
    <alternativeName>
        <fullName>UDP-N-acetylmuramoyl-L-alanyl-D-glutamate synthetase</fullName>
    </alternativeName>
</protein>
<name>MURD_MYCTO</name>